<comment type="function">
    <text>May play a role in signal transduction pathways that involve calcium as a second messenger.</text>
</comment>
<comment type="catalytic activity">
    <reaction>
        <text>L-seryl-[protein] + ATP = O-phospho-L-seryl-[protein] + ADP + H(+)</text>
        <dbReference type="Rhea" id="RHEA:17989"/>
        <dbReference type="Rhea" id="RHEA-COMP:9863"/>
        <dbReference type="Rhea" id="RHEA-COMP:11604"/>
        <dbReference type="ChEBI" id="CHEBI:15378"/>
        <dbReference type="ChEBI" id="CHEBI:29999"/>
        <dbReference type="ChEBI" id="CHEBI:30616"/>
        <dbReference type="ChEBI" id="CHEBI:83421"/>
        <dbReference type="ChEBI" id="CHEBI:456216"/>
        <dbReference type="EC" id="2.7.11.1"/>
    </reaction>
</comment>
<comment type="catalytic activity">
    <reaction>
        <text>L-threonyl-[protein] + ATP = O-phospho-L-threonyl-[protein] + ADP + H(+)</text>
        <dbReference type="Rhea" id="RHEA:46608"/>
        <dbReference type="Rhea" id="RHEA-COMP:11060"/>
        <dbReference type="Rhea" id="RHEA-COMP:11605"/>
        <dbReference type="ChEBI" id="CHEBI:15378"/>
        <dbReference type="ChEBI" id="CHEBI:30013"/>
        <dbReference type="ChEBI" id="CHEBI:30616"/>
        <dbReference type="ChEBI" id="CHEBI:61977"/>
        <dbReference type="ChEBI" id="CHEBI:456216"/>
        <dbReference type="EC" id="2.7.11.1"/>
    </reaction>
</comment>
<comment type="activity regulation">
    <text evidence="1">Activated by calcium. Autophosphorylation may play an important role in the regulation of the kinase activity (By similarity).</text>
</comment>
<comment type="subcellular location">
    <subcellularLocation>
        <location evidence="7">Membrane</location>
        <topology evidence="7">Lipid-anchor</topology>
    </subcellularLocation>
</comment>
<comment type="domain">
    <text evidence="1">There are 3 contiguous domains conserved in the CDPK subfamily: a kinase domain, an autoinhibitory (junction) domain and a calmodulin-like domain. The autoinhibitory domain (309-339) inactivates kinase activity under calcium-free conditions (By similarity).</text>
</comment>
<comment type="similarity">
    <text evidence="4">Belongs to the protein kinase superfamily. Ser/Thr protein kinase family. CDPK subfamily.</text>
</comment>
<comment type="sequence caution" evidence="7">
    <conflict type="erroneous gene model prediction">
        <sequence resource="EMBL-CDS" id="AAD03452"/>
    </conflict>
</comment>
<comment type="sequence caution" evidence="7">
    <conflict type="erroneous gene model prediction">
        <sequence resource="EMBL-CDS" id="CAB80836"/>
    </conflict>
</comment>
<protein>
    <recommendedName>
        <fullName>Calcium-dependent protein kinase 22</fullName>
        <ecNumber>2.7.11.1</ecNumber>
    </recommendedName>
</protein>
<accession>Q9ZSA3</accession>
<accession>F4JGW5</accession>
<proteinExistence type="inferred from homology"/>
<keyword id="KW-0067">ATP-binding</keyword>
<keyword id="KW-0106">Calcium</keyword>
<keyword id="KW-0418">Kinase</keyword>
<keyword id="KW-0449">Lipoprotein</keyword>
<keyword id="KW-0472">Membrane</keyword>
<keyword id="KW-0479">Metal-binding</keyword>
<keyword id="KW-0519">Myristate</keyword>
<keyword id="KW-0547">Nucleotide-binding</keyword>
<keyword id="KW-0597">Phosphoprotein</keyword>
<keyword id="KW-1185">Reference proteome</keyword>
<keyword id="KW-0677">Repeat</keyword>
<keyword id="KW-0723">Serine/threonine-protein kinase</keyword>
<keyword id="KW-0808">Transferase</keyword>
<gene>
    <name type="primary">CPK22</name>
    <name type="ordered locus">At4g04710</name>
    <name type="ORF">T4B21.12</name>
</gene>
<name>CDPKM_ARATH</name>
<evidence type="ECO:0000250" key="1"/>
<evidence type="ECO:0000250" key="2">
    <source>
        <dbReference type="UniProtKB" id="Q9FKW4"/>
    </source>
</evidence>
<evidence type="ECO:0000255" key="3"/>
<evidence type="ECO:0000255" key="4">
    <source>
        <dbReference type="PROSITE-ProRule" id="PRU00159"/>
    </source>
</evidence>
<evidence type="ECO:0000255" key="5">
    <source>
        <dbReference type="PROSITE-ProRule" id="PRU00448"/>
    </source>
</evidence>
<evidence type="ECO:0000255" key="6">
    <source>
        <dbReference type="PROSITE-ProRule" id="PRU10027"/>
    </source>
</evidence>
<evidence type="ECO:0000305" key="7"/>
<reference key="1">
    <citation type="journal article" date="1999" name="Nature">
        <title>Sequence and analysis of chromosome 4 of the plant Arabidopsis thaliana.</title>
        <authorList>
            <person name="Mayer K.F.X."/>
            <person name="Schueller C."/>
            <person name="Wambutt R."/>
            <person name="Murphy G."/>
            <person name="Volckaert G."/>
            <person name="Pohl T."/>
            <person name="Duesterhoeft A."/>
            <person name="Stiekema W."/>
            <person name="Entian K.-D."/>
            <person name="Terryn N."/>
            <person name="Harris B."/>
            <person name="Ansorge W."/>
            <person name="Brandt P."/>
            <person name="Grivell L.A."/>
            <person name="Rieger M."/>
            <person name="Weichselgartner M."/>
            <person name="de Simone V."/>
            <person name="Obermaier B."/>
            <person name="Mache R."/>
            <person name="Mueller M."/>
            <person name="Kreis M."/>
            <person name="Delseny M."/>
            <person name="Puigdomenech P."/>
            <person name="Watson M."/>
            <person name="Schmidtheini T."/>
            <person name="Reichert B."/>
            <person name="Portetelle D."/>
            <person name="Perez-Alonso M."/>
            <person name="Boutry M."/>
            <person name="Bancroft I."/>
            <person name="Vos P."/>
            <person name="Hoheisel J."/>
            <person name="Zimmermann W."/>
            <person name="Wedler H."/>
            <person name="Ridley P."/>
            <person name="Langham S.-A."/>
            <person name="McCullagh B."/>
            <person name="Bilham L."/>
            <person name="Robben J."/>
            <person name="van der Schueren J."/>
            <person name="Grymonprez B."/>
            <person name="Chuang Y.-J."/>
            <person name="Vandenbussche F."/>
            <person name="Braeken M."/>
            <person name="Weltjens I."/>
            <person name="Voet M."/>
            <person name="Bastiaens I."/>
            <person name="Aert R."/>
            <person name="Defoor E."/>
            <person name="Weitzenegger T."/>
            <person name="Bothe G."/>
            <person name="Ramsperger U."/>
            <person name="Hilbert H."/>
            <person name="Braun M."/>
            <person name="Holzer E."/>
            <person name="Brandt A."/>
            <person name="Peters S."/>
            <person name="van Staveren M."/>
            <person name="Dirkse W."/>
            <person name="Mooijman P."/>
            <person name="Klein Lankhorst R."/>
            <person name="Rose M."/>
            <person name="Hauf J."/>
            <person name="Koetter P."/>
            <person name="Berneiser S."/>
            <person name="Hempel S."/>
            <person name="Feldpausch M."/>
            <person name="Lamberth S."/>
            <person name="Van den Daele H."/>
            <person name="De Keyser A."/>
            <person name="Buysshaert C."/>
            <person name="Gielen J."/>
            <person name="Villarroel R."/>
            <person name="De Clercq R."/>
            <person name="van Montagu M."/>
            <person name="Rogers J."/>
            <person name="Cronin A."/>
            <person name="Quail M.A."/>
            <person name="Bray-Allen S."/>
            <person name="Clark L."/>
            <person name="Doggett J."/>
            <person name="Hall S."/>
            <person name="Kay M."/>
            <person name="Lennard N."/>
            <person name="McLay K."/>
            <person name="Mayes R."/>
            <person name="Pettett A."/>
            <person name="Rajandream M.A."/>
            <person name="Lyne M."/>
            <person name="Benes V."/>
            <person name="Rechmann S."/>
            <person name="Borkova D."/>
            <person name="Bloecker H."/>
            <person name="Scharfe M."/>
            <person name="Grimm M."/>
            <person name="Loehnert T.-H."/>
            <person name="Dose S."/>
            <person name="de Haan M."/>
            <person name="Maarse A.C."/>
            <person name="Schaefer M."/>
            <person name="Mueller-Auer S."/>
            <person name="Gabel C."/>
            <person name="Fuchs M."/>
            <person name="Fartmann B."/>
            <person name="Granderath K."/>
            <person name="Dauner D."/>
            <person name="Herzl A."/>
            <person name="Neumann S."/>
            <person name="Argiriou A."/>
            <person name="Vitale D."/>
            <person name="Liguori R."/>
            <person name="Piravandi E."/>
            <person name="Massenet O."/>
            <person name="Quigley F."/>
            <person name="Clabauld G."/>
            <person name="Muendlein A."/>
            <person name="Felber R."/>
            <person name="Schnabl S."/>
            <person name="Hiller R."/>
            <person name="Schmidt W."/>
            <person name="Lecharny A."/>
            <person name="Aubourg S."/>
            <person name="Chefdor F."/>
            <person name="Cooke R."/>
            <person name="Berger C."/>
            <person name="Monfort A."/>
            <person name="Casacuberta E."/>
            <person name="Gibbons T."/>
            <person name="Weber N."/>
            <person name="Vandenbol M."/>
            <person name="Bargues M."/>
            <person name="Terol J."/>
            <person name="Torres A."/>
            <person name="Perez-Perez A."/>
            <person name="Purnelle B."/>
            <person name="Bent E."/>
            <person name="Johnson S."/>
            <person name="Tacon D."/>
            <person name="Jesse T."/>
            <person name="Heijnen L."/>
            <person name="Schwarz S."/>
            <person name="Scholler P."/>
            <person name="Heber S."/>
            <person name="Francs P."/>
            <person name="Bielke C."/>
            <person name="Frishman D."/>
            <person name="Haase D."/>
            <person name="Lemcke K."/>
            <person name="Mewes H.-W."/>
            <person name="Stocker S."/>
            <person name="Zaccaria P."/>
            <person name="Bevan M."/>
            <person name="Wilson R.K."/>
            <person name="de la Bastide M."/>
            <person name="Habermann K."/>
            <person name="Parnell L."/>
            <person name="Dedhia N."/>
            <person name="Gnoj L."/>
            <person name="Schutz K."/>
            <person name="Huang E."/>
            <person name="Spiegel L."/>
            <person name="Sekhon M."/>
            <person name="Murray J."/>
            <person name="Sheet P."/>
            <person name="Cordes M."/>
            <person name="Abu-Threideh J."/>
            <person name="Stoneking T."/>
            <person name="Kalicki J."/>
            <person name="Graves T."/>
            <person name="Harmon G."/>
            <person name="Edwards J."/>
            <person name="Latreille P."/>
            <person name="Courtney L."/>
            <person name="Cloud J."/>
            <person name="Abbott A."/>
            <person name="Scott K."/>
            <person name="Johnson D."/>
            <person name="Minx P."/>
            <person name="Bentley D."/>
            <person name="Fulton B."/>
            <person name="Miller N."/>
            <person name="Greco T."/>
            <person name="Kemp K."/>
            <person name="Kramer J."/>
            <person name="Fulton L."/>
            <person name="Mardis E."/>
            <person name="Dante M."/>
            <person name="Pepin K."/>
            <person name="Hillier L.W."/>
            <person name="Nelson J."/>
            <person name="Spieth J."/>
            <person name="Ryan E."/>
            <person name="Andrews S."/>
            <person name="Geisel C."/>
            <person name="Layman D."/>
            <person name="Du H."/>
            <person name="Ali J."/>
            <person name="Berghoff A."/>
            <person name="Jones K."/>
            <person name="Drone K."/>
            <person name="Cotton M."/>
            <person name="Joshu C."/>
            <person name="Antonoiu B."/>
            <person name="Zidanic M."/>
            <person name="Strong C."/>
            <person name="Sun H."/>
            <person name="Lamar B."/>
            <person name="Yordan C."/>
            <person name="Ma P."/>
            <person name="Zhong J."/>
            <person name="Preston R."/>
            <person name="Vil D."/>
            <person name="Shekher M."/>
            <person name="Matero A."/>
            <person name="Shah R."/>
            <person name="Swaby I.K."/>
            <person name="O'Shaughnessy A."/>
            <person name="Rodriguez M."/>
            <person name="Hoffman J."/>
            <person name="Till S."/>
            <person name="Granat S."/>
            <person name="Shohdy N."/>
            <person name="Hasegawa A."/>
            <person name="Hameed A."/>
            <person name="Lodhi M."/>
            <person name="Johnson A."/>
            <person name="Chen E."/>
            <person name="Marra M.A."/>
            <person name="Martienssen R."/>
            <person name="McCombie W.R."/>
        </authorList>
    </citation>
    <scope>NUCLEOTIDE SEQUENCE [LARGE SCALE GENOMIC DNA]</scope>
    <source>
        <strain>cv. Columbia</strain>
    </source>
</reference>
<reference key="2">
    <citation type="journal article" date="2017" name="Plant J.">
        <title>Araport11: a complete reannotation of the Arabidopsis thaliana reference genome.</title>
        <authorList>
            <person name="Cheng C.Y."/>
            <person name="Krishnakumar V."/>
            <person name="Chan A.P."/>
            <person name="Thibaud-Nissen F."/>
            <person name="Schobel S."/>
            <person name="Town C.D."/>
        </authorList>
    </citation>
    <scope>GENOME REANNOTATION</scope>
    <source>
        <strain>cv. Columbia</strain>
    </source>
</reference>
<reference key="3">
    <citation type="journal article" date="2001" name="New Phytol.">
        <title>The CDPK superfamily of protein kinases.</title>
        <authorList>
            <person name="Harmon A.C."/>
            <person name="Gribskov M."/>
            <person name="Gubrium E."/>
            <person name="Harper J.F."/>
        </authorList>
    </citation>
    <scope>GENE FAMILY</scope>
    <scope>NOMENCLATURE</scope>
</reference>
<reference key="4">
    <citation type="journal article" date="2002" name="Plant Physiol.">
        <title>Calcium signaling through protein kinases. The Arabidopsis calcium-dependent protein kinase gene family.</title>
        <authorList>
            <person name="Cheng S.-H."/>
            <person name="Willmann M.R."/>
            <person name="Chen H.-C."/>
            <person name="Sheen J."/>
        </authorList>
    </citation>
    <scope>GENE FAMILY</scope>
    <scope>NOMENCLATURE</scope>
</reference>
<reference key="5">
    <citation type="journal article" date="2003" name="Plant Physiol.">
        <title>The Arabidopsis CDPK-SnRK superfamily of protein kinases.</title>
        <authorList>
            <person name="Hrabak E.M."/>
            <person name="Chan C.W.M."/>
            <person name="Gribskov M."/>
            <person name="Harper J.F."/>
            <person name="Choi J.H."/>
            <person name="Halford N."/>
            <person name="Kudla J."/>
            <person name="Luan S."/>
            <person name="Nimmo H.G."/>
            <person name="Sussman M.R."/>
            <person name="Thomas M."/>
            <person name="Walker-Simmons K."/>
            <person name="Zhu J.-K."/>
            <person name="Harmon A.C."/>
        </authorList>
    </citation>
    <scope>GENE FAMILY</scope>
    <scope>NOMENCLATURE</scope>
</reference>
<organism>
    <name type="scientific">Arabidopsis thaliana</name>
    <name type="common">Mouse-ear cress</name>
    <dbReference type="NCBI Taxonomy" id="3702"/>
    <lineage>
        <taxon>Eukaryota</taxon>
        <taxon>Viridiplantae</taxon>
        <taxon>Streptophyta</taxon>
        <taxon>Embryophyta</taxon>
        <taxon>Tracheophyta</taxon>
        <taxon>Spermatophyta</taxon>
        <taxon>Magnoliopsida</taxon>
        <taxon>eudicotyledons</taxon>
        <taxon>Gunneridae</taxon>
        <taxon>Pentapetalae</taxon>
        <taxon>rosids</taxon>
        <taxon>malvids</taxon>
        <taxon>Brassicales</taxon>
        <taxon>Brassicaceae</taxon>
        <taxon>Camelineae</taxon>
        <taxon>Arabidopsis</taxon>
    </lineage>
</organism>
<feature type="initiator methionine" description="Removed" evidence="3">
    <location>
        <position position="1"/>
    </location>
</feature>
<feature type="chain" id="PRO_0000363344" description="Calcium-dependent protein kinase 22">
    <location>
        <begin position="2"/>
        <end position="498"/>
    </location>
</feature>
<feature type="domain" description="Protein kinase" evidence="4">
    <location>
        <begin position="36"/>
        <end position="305"/>
    </location>
</feature>
<feature type="domain" description="EF-hand 1" evidence="5">
    <location>
        <begin position="346"/>
        <end position="381"/>
    </location>
</feature>
<feature type="domain" description="EF-hand 2" evidence="5">
    <location>
        <begin position="382"/>
        <end position="417"/>
    </location>
</feature>
<feature type="domain" description="EF-hand 3" evidence="5">
    <location>
        <begin position="418"/>
        <end position="453"/>
    </location>
</feature>
<feature type="domain" description="EF-hand 4" evidence="5">
    <location>
        <begin position="454"/>
        <end position="488"/>
    </location>
</feature>
<feature type="region of interest" description="Autoinhibitory domain" evidence="1">
    <location>
        <begin position="309"/>
        <end position="339"/>
    </location>
</feature>
<feature type="active site" description="Proton acceptor" evidence="4 6">
    <location>
        <position position="164"/>
    </location>
</feature>
<feature type="binding site" evidence="4">
    <location>
        <begin position="42"/>
        <end position="50"/>
    </location>
    <ligand>
        <name>ATP</name>
        <dbReference type="ChEBI" id="CHEBI:30616"/>
    </ligand>
</feature>
<feature type="binding site" evidence="4">
    <location>
        <position position="65"/>
    </location>
    <ligand>
        <name>ATP</name>
        <dbReference type="ChEBI" id="CHEBI:30616"/>
    </ligand>
</feature>
<feature type="binding site" evidence="5">
    <location>
        <position position="359"/>
    </location>
    <ligand>
        <name>Ca(2+)</name>
        <dbReference type="ChEBI" id="CHEBI:29108"/>
        <label>1</label>
    </ligand>
</feature>
<feature type="binding site" evidence="5">
    <location>
        <position position="361"/>
    </location>
    <ligand>
        <name>Ca(2+)</name>
        <dbReference type="ChEBI" id="CHEBI:29108"/>
        <label>1</label>
    </ligand>
</feature>
<feature type="binding site" evidence="5">
    <location>
        <position position="363"/>
    </location>
    <ligand>
        <name>Ca(2+)</name>
        <dbReference type="ChEBI" id="CHEBI:29108"/>
        <label>1</label>
    </ligand>
</feature>
<feature type="binding site" evidence="5">
    <location>
        <position position="365"/>
    </location>
    <ligand>
        <name>Ca(2+)</name>
        <dbReference type="ChEBI" id="CHEBI:29108"/>
        <label>1</label>
    </ligand>
</feature>
<feature type="binding site" evidence="5">
    <location>
        <position position="370"/>
    </location>
    <ligand>
        <name>Ca(2+)</name>
        <dbReference type="ChEBI" id="CHEBI:29108"/>
        <label>1</label>
    </ligand>
</feature>
<feature type="binding site" evidence="5">
    <location>
        <position position="395"/>
    </location>
    <ligand>
        <name>Ca(2+)</name>
        <dbReference type="ChEBI" id="CHEBI:29108"/>
        <label>2</label>
    </ligand>
</feature>
<feature type="binding site" evidence="5">
    <location>
        <position position="397"/>
    </location>
    <ligand>
        <name>Ca(2+)</name>
        <dbReference type="ChEBI" id="CHEBI:29108"/>
        <label>2</label>
    </ligand>
</feature>
<feature type="binding site" evidence="5">
    <location>
        <position position="399"/>
    </location>
    <ligand>
        <name>Ca(2+)</name>
        <dbReference type="ChEBI" id="CHEBI:29108"/>
        <label>2</label>
    </ligand>
</feature>
<feature type="binding site" evidence="5">
    <location>
        <position position="401"/>
    </location>
    <ligand>
        <name>Ca(2+)</name>
        <dbReference type="ChEBI" id="CHEBI:29108"/>
        <label>2</label>
    </ligand>
</feature>
<feature type="binding site" evidence="5">
    <location>
        <position position="406"/>
    </location>
    <ligand>
        <name>Ca(2+)</name>
        <dbReference type="ChEBI" id="CHEBI:29108"/>
        <label>2</label>
    </ligand>
</feature>
<feature type="binding site" evidence="5">
    <location>
        <position position="431"/>
    </location>
    <ligand>
        <name>Ca(2+)</name>
        <dbReference type="ChEBI" id="CHEBI:29108"/>
        <label>3</label>
    </ligand>
</feature>
<feature type="binding site" evidence="5">
    <location>
        <position position="433"/>
    </location>
    <ligand>
        <name>Ca(2+)</name>
        <dbReference type="ChEBI" id="CHEBI:29108"/>
        <label>3</label>
    </ligand>
</feature>
<feature type="binding site" evidence="5">
    <location>
        <position position="435"/>
    </location>
    <ligand>
        <name>Ca(2+)</name>
        <dbReference type="ChEBI" id="CHEBI:29108"/>
        <label>3</label>
    </ligand>
</feature>
<feature type="binding site" evidence="5">
    <location>
        <position position="437"/>
    </location>
    <ligand>
        <name>Ca(2+)</name>
        <dbReference type="ChEBI" id="CHEBI:29108"/>
        <label>3</label>
    </ligand>
</feature>
<feature type="binding site" evidence="5">
    <location>
        <position position="442"/>
    </location>
    <ligand>
        <name>Ca(2+)</name>
        <dbReference type="ChEBI" id="CHEBI:29108"/>
        <label>3</label>
    </ligand>
</feature>
<feature type="binding site" evidence="5">
    <location>
        <position position="466"/>
    </location>
    <ligand>
        <name>Ca(2+)</name>
        <dbReference type="ChEBI" id="CHEBI:29108"/>
        <label>4</label>
    </ligand>
</feature>
<feature type="binding site" evidence="5">
    <location>
        <position position="468"/>
    </location>
    <ligand>
        <name>Ca(2+)</name>
        <dbReference type="ChEBI" id="CHEBI:29108"/>
        <label>4</label>
    </ligand>
</feature>
<feature type="binding site" evidence="5">
    <location>
        <position position="470"/>
    </location>
    <ligand>
        <name>Ca(2+)</name>
        <dbReference type="ChEBI" id="CHEBI:29108"/>
        <label>4</label>
    </ligand>
</feature>
<feature type="binding site" evidence="5">
    <location>
        <position position="472"/>
    </location>
    <ligand>
        <name>Ca(2+)</name>
        <dbReference type="ChEBI" id="CHEBI:29108"/>
        <label>4</label>
    </ligand>
</feature>
<feature type="binding site" evidence="5">
    <location>
        <position position="477"/>
    </location>
    <ligand>
        <name>Ca(2+)</name>
        <dbReference type="ChEBI" id="CHEBI:29108"/>
        <label>4</label>
    </ligand>
</feature>
<feature type="modified residue" description="Phosphoserine" evidence="2">
    <location>
        <position position="204"/>
    </location>
</feature>
<feature type="lipid moiety-binding region" description="N-myristoyl glycine" evidence="3">
    <location>
        <position position="2"/>
    </location>
</feature>
<sequence length="498" mass="55886">MGNCCGSKPLTASDIVSDQKQETILGKPLEDIKKHYSFGDELGKGNFGTTYLCKENSTGKSYACKSIPKRTLSSEEEKEAVKTEIQIMDHVSGQPNIVQIKGSYEDNNSIHIVMELCGGGELFDKIDALVKSHSYYSEKDAAGIFRSIVNAVKICHSLDVVHRDLKPENFLFSSKDENAMLKAIDFGCSVYIKEGKTFERVVGSKYYIAPEVLEGSYGKEIDIWSAGVILYILLSGVPPFQTGIESIIVSTLCIVDAEIKECRLDFESQPWPLISFKAKHLIGKMLTKKPKERISAADVLEHPWMKSEAPDKPIDNVVLSRMKQFRAMNKLKKLALKVIAEGLSEEEIKGLKTMFENMDMDKSGSITYEELKMGLNRHGSKLSETEVKQLMEAADVDGNGTIDYIEFISATMHRHRLERDEHLYKAFQYFDKDGSGHITKEEVEIAMKEHGMGDEANAKDLISEFDKNNDGKIDYEEFCTMMRNGILQPQGKLVGIHI</sequence>
<dbReference type="EC" id="2.7.11.1"/>
<dbReference type="EMBL" id="AF118223">
    <property type="protein sequence ID" value="AAD03452.1"/>
    <property type="status" value="ALT_SEQ"/>
    <property type="molecule type" value="Genomic_DNA"/>
</dbReference>
<dbReference type="EMBL" id="AL161501">
    <property type="protein sequence ID" value="CAB80836.1"/>
    <property type="status" value="ALT_SEQ"/>
    <property type="molecule type" value="Genomic_DNA"/>
</dbReference>
<dbReference type="EMBL" id="CP002687">
    <property type="protein sequence ID" value="AEE82415.2"/>
    <property type="molecule type" value="Genomic_DNA"/>
</dbReference>
<dbReference type="PIR" id="C85059">
    <property type="entry name" value="C85059"/>
</dbReference>
<dbReference type="RefSeq" id="NP_001319866.1">
    <property type="nucleotide sequence ID" value="NM_001340496.1"/>
</dbReference>
<dbReference type="SMR" id="Q9ZSA3"/>
<dbReference type="FunCoup" id="Q9ZSA3">
    <property type="interactions" value="761"/>
</dbReference>
<dbReference type="STRING" id="3702.Q9ZSA3"/>
<dbReference type="iPTMnet" id="Q9ZSA3"/>
<dbReference type="SwissPalm" id="Q9ZSA3"/>
<dbReference type="PaxDb" id="3702-AT4G04710.1"/>
<dbReference type="ProteomicsDB" id="222607"/>
<dbReference type="EnsemblPlants" id="AT4G04710.1">
    <property type="protein sequence ID" value="AT4G04710.1"/>
    <property type="gene ID" value="AT4G04710"/>
</dbReference>
<dbReference type="GeneID" id="825806"/>
<dbReference type="Gramene" id="AT4G04710.1">
    <property type="protein sequence ID" value="AT4G04710.1"/>
    <property type="gene ID" value="AT4G04710"/>
</dbReference>
<dbReference type="KEGG" id="ath:AT4G04710"/>
<dbReference type="Araport" id="AT4G04710"/>
<dbReference type="TAIR" id="AT4G04710">
    <property type="gene designation" value="CPK22"/>
</dbReference>
<dbReference type="eggNOG" id="KOG0032">
    <property type="taxonomic scope" value="Eukaryota"/>
</dbReference>
<dbReference type="HOGENOM" id="CLU_000288_37_3_1"/>
<dbReference type="InParanoid" id="Q9ZSA3"/>
<dbReference type="OMA" id="GTAYACK"/>
<dbReference type="OrthoDB" id="40902at2759"/>
<dbReference type="PhylomeDB" id="Q9ZSA3"/>
<dbReference type="PRO" id="PR:Q9ZSA3"/>
<dbReference type="Proteomes" id="UP000006548">
    <property type="component" value="Chromosome 4"/>
</dbReference>
<dbReference type="ExpressionAtlas" id="Q9ZSA3">
    <property type="expression patterns" value="baseline and differential"/>
</dbReference>
<dbReference type="GO" id="GO:0016020">
    <property type="term" value="C:membrane"/>
    <property type="evidence" value="ECO:0007669"/>
    <property type="project" value="UniProtKB-SubCell"/>
</dbReference>
<dbReference type="GO" id="GO:0005524">
    <property type="term" value="F:ATP binding"/>
    <property type="evidence" value="ECO:0007669"/>
    <property type="project" value="UniProtKB-KW"/>
</dbReference>
<dbReference type="GO" id="GO:0005509">
    <property type="term" value="F:calcium ion binding"/>
    <property type="evidence" value="ECO:0007669"/>
    <property type="project" value="InterPro"/>
</dbReference>
<dbReference type="GO" id="GO:0106310">
    <property type="term" value="F:protein serine kinase activity"/>
    <property type="evidence" value="ECO:0007669"/>
    <property type="project" value="RHEA"/>
</dbReference>
<dbReference type="GO" id="GO:0004674">
    <property type="term" value="F:protein serine/threonine kinase activity"/>
    <property type="evidence" value="ECO:0007669"/>
    <property type="project" value="UniProtKB-KW"/>
</dbReference>
<dbReference type="CDD" id="cd05117">
    <property type="entry name" value="STKc_CAMK"/>
    <property type="match status" value="1"/>
</dbReference>
<dbReference type="FunFam" id="1.10.238.10:FF:000015">
    <property type="entry name" value="Calcium-dependent protein kinase 1"/>
    <property type="match status" value="1"/>
</dbReference>
<dbReference type="FunFam" id="3.30.200.20:FF:000004">
    <property type="entry name" value="Calcium-dependent protein kinase 1"/>
    <property type="match status" value="1"/>
</dbReference>
<dbReference type="FunFam" id="1.10.510.10:FF:001411">
    <property type="entry name" value="Calcium-dependent protein kinase 27"/>
    <property type="match status" value="1"/>
</dbReference>
<dbReference type="Gene3D" id="1.10.238.10">
    <property type="entry name" value="EF-hand"/>
    <property type="match status" value="2"/>
</dbReference>
<dbReference type="Gene3D" id="3.30.200.20">
    <property type="entry name" value="Phosphorylase Kinase, domain 1"/>
    <property type="match status" value="1"/>
</dbReference>
<dbReference type="Gene3D" id="1.10.510.10">
    <property type="entry name" value="Transferase(Phosphotransferase) domain 1"/>
    <property type="match status" value="1"/>
</dbReference>
<dbReference type="InterPro" id="IPR050205">
    <property type="entry name" value="CDPK_Ser/Thr_kinases"/>
</dbReference>
<dbReference type="InterPro" id="IPR011992">
    <property type="entry name" value="EF-hand-dom_pair"/>
</dbReference>
<dbReference type="InterPro" id="IPR018247">
    <property type="entry name" value="EF_Hand_1_Ca_BS"/>
</dbReference>
<dbReference type="InterPro" id="IPR002048">
    <property type="entry name" value="EF_hand_dom"/>
</dbReference>
<dbReference type="InterPro" id="IPR011009">
    <property type="entry name" value="Kinase-like_dom_sf"/>
</dbReference>
<dbReference type="InterPro" id="IPR000719">
    <property type="entry name" value="Prot_kinase_dom"/>
</dbReference>
<dbReference type="InterPro" id="IPR017441">
    <property type="entry name" value="Protein_kinase_ATP_BS"/>
</dbReference>
<dbReference type="InterPro" id="IPR008271">
    <property type="entry name" value="Ser/Thr_kinase_AS"/>
</dbReference>
<dbReference type="PANTHER" id="PTHR24349">
    <property type="entry name" value="SERINE/THREONINE-PROTEIN KINASE"/>
    <property type="match status" value="1"/>
</dbReference>
<dbReference type="Pfam" id="PF13499">
    <property type="entry name" value="EF-hand_7"/>
    <property type="match status" value="2"/>
</dbReference>
<dbReference type="Pfam" id="PF00069">
    <property type="entry name" value="Pkinase"/>
    <property type="match status" value="1"/>
</dbReference>
<dbReference type="SMART" id="SM00054">
    <property type="entry name" value="EFh"/>
    <property type="match status" value="4"/>
</dbReference>
<dbReference type="SMART" id="SM00220">
    <property type="entry name" value="S_TKc"/>
    <property type="match status" value="1"/>
</dbReference>
<dbReference type="SUPFAM" id="SSF47473">
    <property type="entry name" value="EF-hand"/>
    <property type="match status" value="1"/>
</dbReference>
<dbReference type="SUPFAM" id="SSF56112">
    <property type="entry name" value="Protein kinase-like (PK-like)"/>
    <property type="match status" value="1"/>
</dbReference>
<dbReference type="PROSITE" id="PS00018">
    <property type="entry name" value="EF_HAND_1"/>
    <property type="match status" value="4"/>
</dbReference>
<dbReference type="PROSITE" id="PS50222">
    <property type="entry name" value="EF_HAND_2"/>
    <property type="match status" value="4"/>
</dbReference>
<dbReference type="PROSITE" id="PS00107">
    <property type="entry name" value="PROTEIN_KINASE_ATP"/>
    <property type="match status" value="1"/>
</dbReference>
<dbReference type="PROSITE" id="PS50011">
    <property type="entry name" value="PROTEIN_KINASE_DOM"/>
    <property type="match status" value="1"/>
</dbReference>
<dbReference type="PROSITE" id="PS00108">
    <property type="entry name" value="PROTEIN_KINASE_ST"/>
    <property type="match status" value="1"/>
</dbReference>